<protein>
    <recommendedName>
        <fullName>Epidermal growth factor receptor</fullName>
        <shortName>Egfr</shortName>
        <ecNumber>2.7.10.1</ecNumber>
    </recommendedName>
    <alternativeName>
        <fullName>Drosophila relative of ERBB</fullName>
    </alternativeName>
    <alternativeName>
        <fullName>Gurken receptor</fullName>
    </alternativeName>
    <alternativeName>
        <fullName>Protein torpedo</fullName>
    </alternativeName>
</protein>
<reference key="1">
    <citation type="journal article" date="1994" name="Genetics">
        <title>Molecular analysis of the Drosophila EGF receptor homolog reveals that several genetically defined classes of alleles cluster in subdomains of the receptor protein.</title>
        <authorList>
            <person name="Clifford R."/>
            <person name="Schuepbach T."/>
        </authorList>
    </citation>
    <scope>NUCLEOTIDE SEQUENCE [GENOMIC DNA] (ISOFORMS TYPE I AND TYPE II)</scope>
    <scope>FUNCTION</scope>
</reference>
<reference key="2">
    <citation type="submission" date="1998-03" db="EMBL/GenBank/DDBJ databases">
        <authorList>
            <person name="Clifford R."/>
            <person name="Schuepbach T."/>
        </authorList>
    </citation>
    <scope>SEQUENCE REVISION</scope>
</reference>
<reference key="3">
    <citation type="journal article" date="1985" name="Cell">
        <title>The Drosophila EGF receptor gene homolog: conservation of both hormone binding and kinase domains.</title>
        <authorList>
            <person name="Livneh E."/>
            <person name="Glazer L."/>
            <person name="Segal D."/>
            <person name="Schlessinger J."/>
            <person name="Shilo B.-Z."/>
        </authorList>
    </citation>
    <scope>NUCLEOTIDE SEQUENCE [GENOMIC DNA]</scope>
    <scope>ALTERNATIVE SPLICING</scope>
</reference>
<reference key="4">
    <citation type="journal article" date="1986" name="Cell">
        <title>Alternative 5' exons and tissue-specific expression of the Drosophila EGF receptor homolog transcripts.</title>
        <authorList>
            <person name="Schejter E.D."/>
            <person name="Segal D."/>
            <person name="Glazer L."/>
            <person name="Shilo B.-Z."/>
        </authorList>
    </citation>
    <scope>NUCLEOTIDE SEQUENCE [MRNA]</scope>
    <scope>CHARACTERIZATION</scope>
    <scope>ALTERNATIVE SPLICING</scope>
    <source>
        <strain>Oregon-R</strain>
        <tissue>Embryo</tissue>
    </source>
</reference>
<reference key="5">
    <citation type="journal article" date="1999" name="Dev. Biol.">
        <title>Several levels of EGF receptor signaling during photoreceptor specification in wild-type, Ellipse, and null mutant Drosophila.</title>
        <authorList>
            <person name="Lesokhin A.M."/>
            <person name="Yu S.-Y."/>
            <person name="Katz J."/>
            <person name="Baker N.E."/>
        </authorList>
    </citation>
    <scope>NUCLEOTIDE SEQUENCE [GENOMIC DNA] (ISOFORMS TYPE I AND TYPE II)</scope>
    <scope>FUNCTION</scope>
    <scope>TISSUE SPECIFICITY</scope>
    <scope>MUTANTS</scope>
</reference>
<reference key="6">
    <citation type="journal article" date="2000" name="Science">
        <title>The genome sequence of Drosophila melanogaster.</title>
        <authorList>
            <person name="Adams M.D."/>
            <person name="Celniker S.E."/>
            <person name="Holt R.A."/>
            <person name="Evans C.A."/>
            <person name="Gocayne J.D."/>
            <person name="Amanatides P.G."/>
            <person name="Scherer S.E."/>
            <person name="Li P.W."/>
            <person name="Hoskins R.A."/>
            <person name="Galle R.F."/>
            <person name="George R.A."/>
            <person name="Lewis S.E."/>
            <person name="Richards S."/>
            <person name="Ashburner M."/>
            <person name="Henderson S.N."/>
            <person name="Sutton G.G."/>
            <person name="Wortman J.R."/>
            <person name="Yandell M.D."/>
            <person name="Zhang Q."/>
            <person name="Chen L.X."/>
            <person name="Brandon R.C."/>
            <person name="Rogers Y.-H.C."/>
            <person name="Blazej R.G."/>
            <person name="Champe M."/>
            <person name="Pfeiffer B.D."/>
            <person name="Wan K.H."/>
            <person name="Doyle C."/>
            <person name="Baxter E.G."/>
            <person name="Helt G."/>
            <person name="Nelson C.R."/>
            <person name="Miklos G.L.G."/>
            <person name="Abril J.F."/>
            <person name="Agbayani A."/>
            <person name="An H.-J."/>
            <person name="Andrews-Pfannkoch C."/>
            <person name="Baldwin D."/>
            <person name="Ballew R.M."/>
            <person name="Basu A."/>
            <person name="Baxendale J."/>
            <person name="Bayraktaroglu L."/>
            <person name="Beasley E.M."/>
            <person name="Beeson K.Y."/>
            <person name="Benos P.V."/>
            <person name="Berman B.P."/>
            <person name="Bhandari D."/>
            <person name="Bolshakov S."/>
            <person name="Borkova D."/>
            <person name="Botchan M.R."/>
            <person name="Bouck J."/>
            <person name="Brokstein P."/>
            <person name="Brottier P."/>
            <person name="Burtis K.C."/>
            <person name="Busam D.A."/>
            <person name="Butler H."/>
            <person name="Cadieu E."/>
            <person name="Center A."/>
            <person name="Chandra I."/>
            <person name="Cherry J.M."/>
            <person name="Cawley S."/>
            <person name="Dahlke C."/>
            <person name="Davenport L.B."/>
            <person name="Davies P."/>
            <person name="de Pablos B."/>
            <person name="Delcher A."/>
            <person name="Deng Z."/>
            <person name="Mays A.D."/>
            <person name="Dew I."/>
            <person name="Dietz S.M."/>
            <person name="Dodson K."/>
            <person name="Doup L.E."/>
            <person name="Downes M."/>
            <person name="Dugan-Rocha S."/>
            <person name="Dunkov B.C."/>
            <person name="Dunn P."/>
            <person name="Durbin K.J."/>
            <person name="Evangelista C.C."/>
            <person name="Ferraz C."/>
            <person name="Ferriera S."/>
            <person name="Fleischmann W."/>
            <person name="Fosler C."/>
            <person name="Gabrielian A.E."/>
            <person name="Garg N.S."/>
            <person name="Gelbart W.M."/>
            <person name="Glasser K."/>
            <person name="Glodek A."/>
            <person name="Gong F."/>
            <person name="Gorrell J.H."/>
            <person name="Gu Z."/>
            <person name="Guan P."/>
            <person name="Harris M."/>
            <person name="Harris N.L."/>
            <person name="Harvey D.A."/>
            <person name="Heiman T.J."/>
            <person name="Hernandez J.R."/>
            <person name="Houck J."/>
            <person name="Hostin D."/>
            <person name="Houston K.A."/>
            <person name="Howland T.J."/>
            <person name="Wei M.-H."/>
            <person name="Ibegwam C."/>
            <person name="Jalali M."/>
            <person name="Kalush F."/>
            <person name="Karpen G.H."/>
            <person name="Ke Z."/>
            <person name="Kennison J.A."/>
            <person name="Ketchum K.A."/>
            <person name="Kimmel B.E."/>
            <person name="Kodira C.D."/>
            <person name="Kraft C.L."/>
            <person name="Kravitz S."/>
            <person name="Kulp D."/>
            <person name="Lai Z."/>
            <person name="Lasko P."/>
            <person name="Lei Y."/>
            <person name="Levitsky A.A."/>
            <person name="Li J.H."/>
            <person name="Li Z."/>
            <person name="Liang Y."/>
            <person name="Lin X."/>
            <person name="Liu X."/>
            <person name="Mattei B."/>
            <person name="McIntosh T.C."/>
            <person name="McLeod M.P."/>
            <person name="McPherson D."/>
            <person name="Merkulov G."/>
            <person name="Milshina N.V."/>
            <person name="Mobarry C."/>
            <person name="Morris J."/>
            <person name="Moshrefi A."/>
            <person name="Mount S.M."/>
            <person name="Moy M."/>
            <person name="Murphy B."/>
            <person name="Murphy L."/>
            <person name="Muzny D.M."/>
            <person name="Nelson D.L."/>
            <person name="Nelson D.R."/>
            <person name="Nelson K.A."/>
            <person name="Nixon K."/>
            <person name="Nusskern D.R."/>
            <person name="Pacleb J.M."/>
            <person name="Palazzolo M."/>
            <person name="Pittman G.S."/>
            <person name="Pan S."/>
            <person name="Pollard J."/>
            <person name="Puri V."/>
            <person name="Reese M.G."/>
            <person name="Reinert K."/>
            <person name="Remington K."/>
            <person name="Saunders R.D.C."/>
            <person name="Scheeler F."/>
            <person name="Shen H."/>
            <person name="Shue B.C."/>
            <person name="Siden-Kiamos I."/>
            <person name="Simpson M."/>
            <person name="Skupski M.P."/>
            <person name="Smith T.J."/>
            <person name="Spier E."/>
            <person name="Spradling A.C."/>
            <person name="Stapleton M."/>
            <person name="Strong R."/>
            <person name="Sun E."/>
            <person name="Svirskas R."/>
            <person name="Tector C."/>
            <person name="Turner R."/>
            <person name="Venter E."/>
            <person name="Wang A.H."/>
            <person name="Wang X."/>
            <person name="Wang Z.-Y."/>
            <person name="Wassarman D.A."/>
            <person name="Weinstock G.M."/>
            <person name="Weissenbach J."/>
            <person name="Williams S.M."/>
            <person name="Woodage T."/>
            <person name="Worley K.C."/>
            <person name="Wu D."/>
            <person name="Yang S."/>
            <person name="Yao Q.A."/>
            <person name="Ye J."/>
            <person name="Yeh R.-F."/>
            <person name="Zaveri J.S."/>
            <person name="Zhan M."/>
            <person name="Zhang G."/>
            <person name="Zhao Q."/>
            <person name="Zheng L."/>
            <person name="Zheng X.H."/>
            <person name="Zhong F.N."/>
            <person name="Zhong W."/>
            <person name="Zhou X."/>
            <person name="Zhu S.C."/>
            <person name="Zhu X."/>
            <person name="Smith H.O."/>
            <person name="Gibbs R.A."/>
            <person name="Myers E.W."/>
            <person name="Rubin G.M."/>
            <person name="Venter J.C."/>
        </authorList>
    </citation>
    <scope>NUCLEOTIDE SEQUENCE [LARGE SCALE GENOMIC DNA] (ISOFORM TYPE I)</scope>
    <source>
        <strain>Berkeley</strain>
    </source>
</reference>
<reference key="7">
    <citation type="journal article" date="2002" name="Genome Biol.">
        <title>Annotation of the Drosophila melanogaster euchromatic genome: a systematic review.</title>
        <authorList>
            <person name="Misra S."/>
            <person name="Crosby M.A."/>
            <person name="Mungall C.J."/>
            <person name="Matthews B.B."/>
            <person name="Campbell K.S."/>
            <person name="Hradecky P."/>
            <person name="Huang Y."/>
            <person name="Kaminker J.S."/>
            <person name="Millburn G.H."/>
            <person name="Prochnik S.E."/>
            <person name="Smith C.D."/>
            <person name="Tupy J.L."/>
            <person name="Whitfield E.J."/>
            <person name="Bayraktaroglu L."/>
            <person name="Berman B.P."/>
            <person name="Bettencourt B.R."/>
            <person name="Celniker S.E."/>
            <person name="de Grey A.D.N.J."/>
            <person name="Drysdale R.A."/>
            <person name="Harris N.L."/>
            <person name="Richter J."/>
            <person name="Russo S."/>
            <person name="Schroeder A.J."/>
            <person name="Shu S.Q."/>
            <person name="Stapleton M."/>
            <person name="Yamada C."/>
            <person name="Ashburner M."/>
            <person name="Gelbart W.M."/>
            <person name="Rubin G.M."/>
            <person name="Lewis S.E."/>
        </authorList>
    </citation>
    <scope>GENOME REANNOTATION</scope>
    <source>
        <strain>Berkeley</strain>
    </source>
</reference>
<reference key="8">
    <citation type="journal article" date="1985" name="Nature">
        <title>A Drosophila genomic sequence with homology to human epidermal growth factor receptor.</title>
        <authorList>
            <person name="Wadsworth S.C."/>
            <person name="Vincent W.S. III"/>
            <person name="Bilodeau-Wentworth D."/>
        </authorList>
    </citation>
    <scope>NUCLEOTIDE SEQUENCE [GENOMIC DNA] OF 959-1078</scope>
    <source>
        <strain>Daekwanryeong</strain>
    </source>
</reference>
<reference key="9">
    <citation type="journal article" date="1998" name="Biochem. Biophys. Res. Commun.">
        <title>Sampling the genomic pool of protein tyrosine kinase genes using the polymerase chain reaction with genomic DNA.</title>
        <authorList>
            <person name="Oates A.C."/>
            <person name="Wollberg P."/>
            <person name="Achen M.G."/>
            <person name="Wilks A.F."/>
        </authorList>
    </citation>
    <scope>NUCLEOTIDE SEQUENCE [GENOMIC DNA] OF 1069-1121</scope>
    <source>
        <tissue>Embryo</tissue>
    </source>
</reference>
<reference key="10">
    <citation type="journal article" date="1991" name="Genetics">
        <title>Interallelic complementation among DER/flb alleles: implications for the mechanism of signal transduction by receptor-tyrosine kinases.</title>
        <authorList>
            <person name="Raz E."/>
            <person name="Schejter E.D."/>
            <person name="Shilo B.Z."/>
        </authorList>
    </citation>
    <scope>NUCLEOTIDE SEQUENCE [GENOMIC DNA] OF 1133-1137; 1155-1167 AND 1209-1216</scope>
    <scope>MUTANTS</scope>
</reference>
<reference key="11">
    <citation type="journal article" date="1997" name="Cell">
        <title>There must be 50 ways to rule the signal: the case of the Drosophila EGF receptor.</title>
        <authorList>
            <person name="Perrimon N."/>
            <person name="Perkins L.A."/>
        </authorList>
    </citation>
    <scope>REVIEW</scope>
</reference>
<reference key="12">
    <citation type="journal article" date="2000" name="FEBS Lett.">
        <title>Identification of the Drosophila melanogaster homologue of the mammalian signal transducer protein, Vav.</title>
        <authorList>
            <person name="Dekel I."/>
            <person name="Russek N."/>
            <person name="Jones T."/>
            <person name="Mortin M.A."/>
            <person name="Katzav S."/>
        </authorList>
    </citation>
    <scope>INTERACTION WITH VAV</scope>
</reference>
<reference key="13">
    <citation type="journal article" date="2011" name="PLoS ONE">
        <title>Hole-in-one mutant phenotypes link EGFR/ERK signaling to epithelial tissue repair in Drosophila.</title>
        <authorList>
            <person name="Geiger J.A."/>
            <person name="Carvalho L."/>
            <person name="Campos I."/>
            <person name="Santos A.C."/>
            <person name="Jacinto A."/>
        </authorList>
    </citation>
    <scope>FUNCTION</scope>
    <scope>DISRUPTION PHENOTYPE</scope>
</reference>
<reference key="14">
    <citation type="journal article" date="2013" name="PLoS ONE">
        <title>Modulation of morphogenesis by Egfr during dorsal closure in Drosophila.</title>
        <authorList>
            <person name="Shen W."/>
            <person name="Chen X."/>
            <person name="Cormier O."/>
            <person name="Cheng D.C."/>
            <person name="Reed B."/>
            <person name="Harden N."/>
        </authorList>
    </citation>
    <scope>FUNCTION</scope>
</reference>
<reference key="15">
    <citation type="journal article" date="2014" name="Cell">
        <title>Mechanical feedback through E-cadherin promotes direction sensing during collective cell migration.</title>
        <authorList>
            <person name="Cai D."/>
            <person name="Chen S.C."/>
            <person name="Prasad M."/>
            <person name="He L."/>
            <person name="Wang X."/>
            <person name="Choesmel-Cadamuro V."/>
            <person name="Sawyer J.K."/>
            <person name="Danuser G."/>
            <person name="Montell D.J."/>
        </authorList>
    </citation>
    <scope>FUNCTION</scope>
</reference>
<reference key="16">
    <citation type="journal article" date="2021" name="PLoS Genet.">
        <title>EGFRAP encodes a new negative regulator of the EGFR acting in both normal and oncogenic EGFR/Ras-driven tissue morphogenesis.</title>
        <authorList>
            <person name="Soler Beatty J."/>
            <person name="Molnar C."/>
            <person name="Luque C.M."/>
            <person name="de Celis J.F."/>
            <person name="Martin-Bermudo M.D."/>
        </authorList>
    </citation>
    <scope>FUNCTION</scope>
    <scope>MUTAGENESIS OF TYR-1095; TYR-1204; TYR-1218; TYR-1246; TYR-1271; TYR-1310; TYR-1342; TYR-1357 AND 1405-TYR-TYR-1406</scope>
</reference>
<reference evidence="19" key="17">
    <citation type="journal article" date="2009" name="Nature">
        <title>ErbB2 resembles an autoinhibited invertebrate epidermal growth factor receptor.</title>
        <authorList>
            <person name="Alvarado D."/>
            <person name="Klein D.E."/>
            <person name="Lemmon M.A."/>
        </authorList>
    </citation>
    <scope>X-RAY CRYSTALLOGRAPHY (2.70 ANGSTROMS) OF 100-644</scope>
    <scope>GLYCOSYLATION AT ASN-443</scope>
    <scope>FUNCTION</scope>
    <scope>SUBUNIT</scope>
    <scope>GLYCOSYLATION AT ASN-419; ASN-443 AND ASN-482</scope>
    <scope>MUTAGENESIS OF ILE-101; TYR-131; TYR-341; ASN-342; THR-344; TYR-346; VAL-347; LEU-348; TYR-358; HIS-369; 592-THR--VAL-1426; ASP-646; HIS-649; LYS-658 AND 688-THR--VAL-1426</scope>
</reference>
<reference key="18">
    <citation type="journal article" date="2017" name="Development">
        <title>Graf regulates hematopoiesis through GEEC endocytosis of EGFR.</title>
        <authorList>
            <person name="Kim S."/>
            <person name="Nahm M."/>
            <person name="Kim N."/>
            <person name="Kwon Y."/>
            <person name="Kim J."/>
            <person name="Choi S."/>
            <person name="Choi E.Y."/>
            <person name="Shim J."/>
            <person name="Lee C."/>
            <person name="Lee S."/>
        </authorList>
    </citation>
    <scope>INTERACTION WITH GRAF</scope>
    <scope>UBIQUITINATION</scope>
    <scope>MUTAGENESIS OF TYR-1271</scope>
</reference>
<reference evidence="20 21" key="19">
    <citation type="journal article" date="2010" name="Cell">
        <title>Structural basis for negative cooperativity in growth factor binding to an EGF receptor.</title>
        <authorList>
            <person name="Alvarado D."/>
            <person name="Klein D.E."/>
            <person name="Lemmon M.A."/>
        </authorList>
    </citation>
    <scope>X-RAY CRYSTALLOGRAPHY (3.20 ANGSTROMS) OF 100-688 IN COMPLEX WITH MANNOSE</scope>
    <scope>FUNCTION</scope>
    <scope>SUBUNIT</scope>
    <scope>GLYCOSYLATION AT ASN-128; ASN-443; ASN-482 AND ASN-569</scope>
</reference>
<reference key="20">
    <citation type="journal article" date="2012" name="PLoS ONE">
        <title>Drosophila Zpr1 (Zinc finger protein 1) is required downstream of both EGFR and FGFR signaling in tracheal subcellular lumen formation.</title>
        <authorList>
            <person name="Ruiz O.E."/>
            <person name="Nikolova L.S."/>
            <person name="Metzstein M.M."/>
        </authorList>
    </citation>
    <scope>FUNCTION</scope>
    <scope>DISRUPTION PHENOTYPE</scope>
</reference>
<proteinExistence type="evidence at protein level"/>
<keyword id="KW-0002">3D-structure</keyword>
<keyword id="KW-0025">Alternative splicing</keyword>
<keyword id="KW-0067">ATP-binding</keyword>
<keyword id="KW-0217">Developmental protein</keyword>
<keyword id="KW-0325">Glycoprotein</keyword>
<keyword id="KW-0418">Kinase</keyword>
<keyword id="KW-0472">Membrane</keyword>
<keyword id="KW-0547">Nucleotide-binding</keyword>
<keyword id="KW-0597">Phosphoprotein</keyword>
<keyword id="KW-0675">Receptor</keyword>
<keyword id="KW-1185">Reference proteome</keyword>
<keyword id="KW-0732">Signal</keyword>
<keyword id="KW-0808">Transferase</keyword>
<keyword id="KW-0812">Transmembrane</keyword>
<keyword id="KW-1133">Transmembrane helix</keyword>
<keyword id="KW-0829">Tyrosine-protein kinase</keyword>
<keyword id="KW-0832">Ubl conjugation</keyword>
<feature type="signal peptide" evidence="2">
    <location>
        <begin position="1"/>
        <end position="30"/>
    </location>
</feature>
<feature type="chain" id="PRO_0000016676" description="Epidermal growth factor receptor">
    <location>
        <begin position="31"/>
        <end position="1426"/>
    </location>
</feature>
<feature type="topological domain" description="Extracellular" evidence="2">
    <location>
        <begin position="31"/>
        <end position="868"/>
    </location>
</feature>
<feature type="transmembrane region" description="Helical" evidence="2">
    <location>
        <begin position="869"/>
        <end position="889"/>
    </location>
</feature>
<feature type="topological domain" description="Cytoplasmic" evidence="2">
    <location>
        <begin position="890"/>
        <end position="1426"/>
    </location>
</feature>
<feature type="domain" description="Protein kinase" evidence="3">
    <location>
        <begin position="938"/>
        <end position="1198"/>
    </location>
</feature>
<feature type="region of interest" description="Disordered" evidence="5">
    <location>
        <begin position="1232"/>
        <end position="1297"/>
    </location>
</feature>
<feature type="compositionally biased region" description="Basic and acidic residues" evidence="5">
    <location>
        <begin position="1257"/>
        <end position="1276"/>
    </location>
</feature>
<feature type="active site" description="Proton acceptor" evidence="3 4">
    <location>
        <position position="1063"/>
    </location>
</feature>
<feature type="binding site" evidence="3">
    <location>
        <begin position="944"/>
        <end position="952"/>
    </location>
    <ligand>
        <name>ATP</name>
        <dbReference type="ChEBI" id="CHEBI:30616"/>
    </ligand>
</feature>
<feature type="binding site" evidence="3">
    <location>
        <position position="971"/>
    </location>
    <ligand>
        <name>ATP</name>
        <dbReference type="ChEBI" id="CHEBI:30616"/>
    </ligand>
</feature>
<feature type="modified residue" description="Phosphothreonine; by PKC" evidence="1">
    <location>
        <position position="902"/>
    </location>
</feature>
<feature type="modified residue" description="Phosphotyrosine; by autocatalysis" evidence="1">
    <location>
        <position position="1310"/>
    </location>
</feature>
<feature type="glycosylation site" description="N-linked (GlcNAc...) asparagine" evidence="20">
    <location>
        <position position="128"/>
    </location>
</feature>
<feature type="glycosylation site" description="N-linked (GlcNAc...) asparagine" evidence="2">
    <location>
        <position position="241"/>
    </location>
</feature>
<feature type="glycosylation site" description="N-linked (GlcNAc...) asparagine" evidence="2">
    <location>
        <position position="419"/>
    </location>
</feature>
<feature type="glycosylation site" description="N-linked (GlcNAc...) asparagine" evidence="19 20">
    <location>
        <position position="443"/>
    </location>
</feature>
<feature type="glycosylation site" description="N-linked (GlcNAc...) asparagine" evidence="20">
    <location>
        <position position="482"/>
    </location>
</feature>
<feature type="glycosylation site" description="N-linked (GlcNAc...) asparagine" evidence="20">
    <location>
        <position position="569"/>
    </location>
</feature>
<feature type="glycosylation site" description="N-linked (GlcNAc...) asparagine" evidence="2">
    <location>
        <position position="599"/>
    </location>
</feature>
<feature type="glycosylation site" description="N-linked (GlcNAc...) asparagine" evidence="2">
    <location>
        <position position="617"/>
    </location>
</feature>
<feature type="glycosylation site" description="N-linked (GlcNAc...) asparagine" evidence="2">
    <location>
        <position position="816"/>
    </location>
</feature>
<feature type="glycosylation site" description="N-linked (GlcNAc...) asparagine" evidence="2">
    <location>
        <position position="823"/>
    </location>
</feature>
<feature type="glycosylation site" description="N-linked (GlcNAc...) asparagine" evidence="2">
    <location>
        <position position="828"/>
    </location>
</feature>
<feature type="splice variant" id="VSP_002897" description="In isoform Type II." evidence="18">
    <original>MLLRRRNGPCPFPLLLLLLAHCICIWPASAARDRYARQNNRQRHQDIDRDRDRDRFLYRSSSAQNRQRGGANFALGLGANGVTIPTSLEDKNKNEFVKGKI</original>
    <variation>MMIISMWMSISRGLWDSSSILSVLLILACMASITTSSSVSNAGYVDNGNMKV</variation>
    <location>
        <begin position="1"/>
        <end position="101"/>
    </location>
</feature>
<feature type="mutagenesis site" description="Increased binding to spitz; when associated with A-101; A-358 and S-369." evidence="7">
    <original>I</original>
    <variation>A</variation>
    <location>
        <position position="101"/>
    </location>
</feature>
<feature type="mutagenesis site" description="Increased binding to spitz; when associated with A-131; A-358 and S-369." evidence="7">
    <original>Y</original>
    <variation>A</variation>
    <location>
        <position position="131"/>
    </location>
</feature>
<feature type="mutagenesis site" description="In dim-arm; Does not form dimers even in the presence of spitz; when associated with A-342; D-344; E-346; A-347 and D-348." evidence="7">
    <original>Y</original>
    <variation>E</variation>
    <location>
        <position position="341"/>
    </location>
</feature>
<feature type="mutagenesis site" description="In dim-arm; Does not form dimers even in the presence of spitz; when associated with E-341; D-344; E-346; A-347 and D-348." evidence="7">
    <original>N</original>
    <variation>A</variation>
    <location>
        <position position="342"/>
    </location>
</feature>
<feature type="mutagenesis site" description="&gt;D: In dim-arm; Does not form dimers even in the presence of spitz; when associated with E-341; A-342; E-346; A-347 and D-348." evidence="7">
    <original>T</original>
    <variation>D</variation>
    <location>
        <position position="344"/>
    </location>
</feature>
<feature type="mutagenesis site" description="In dim-arm; Does not form dimers even in the presence of spitz; when associated with E-341; A-342; D-344; A-347 and D-348." evidence="7">
    <original>Y</original>
    <variation>E</variation>
    <location>
        <position position="346"/>
    </location>
</feature>
<feature type="mutagenesis site" description="In dim-arm; Does not form dimers even in the presence of Spitz; when associated with E-341; A-342; D-344; E-346 and D-348." evidence="7">
    <original>V</original>
    <variation>A</variation>
    <location>
        <position position="347"/>
    </location>
</feature>
<feature type="mutagenesis site" description="In dim-arm; Does not form dimers even in the presence of spitz; when associated with E-341; A-342; D-344; E-346 and A-347." evidence="7">
    <original>L</original>
    <variation>D</variation>
    <location>
        <position position="348"/>
    </location>
</feature>
<feature type="mutagenesis site" description="Reduced dissociation and increased binding to spitz; when associated with S-369. Increased binding to spitz; when associated with A-101; A-131 and S-369." evidence="7">
    <original>Y</original>
    <variation>A</variation>
    <location>
        <position position="358"/>
    </location>
</feature>
<feature type="mutagenesis site" description="Reduced dissociation and increased binding to spitz; when associated with A-358. Increased binding to spitz; when associated with A-101; A-131 and A-358." evidence="7">
    <original>H</original>
    <variation>S</variation>
    <location>
        <position position="369"/>
    </location>
</feature>
<feature type="mutagenesis site" description="Slightly reduced affinity for spitz." evidence="7">
    <location>
        <begin position="592"/>
        <end position="1426"/>
    </location>
</feature>
<feature type="mutagenesis site" description="In tether; No effect on binding to spitz; when associated with A-649 and A-658." evidence="7">
    <original>D</original>
    <variation>A</variation>
    <location>
        <position position="646"/>
    </location>
</feature>
<feature type="mutagenesis site" description="In tether; No effect on binding to spitz; when associated with A-646 and A-658." evidence="7">
    <original>H</original>
    <variation>A</variation>
    <location>
        <position position="649"/>
    </location>
</feature>
<feature type="mutagenesis site" description="In tether; No effect on binding to spitz; when associated with A-646 and A-649." evidence="7">
    <original>K</original>
    <variation>A</variation>
    <location>
        <position position="658"/>
    </location>
</feature>
<feature type="mutagenesis site" description="Forms dimers in presence of spitz. Forms weak dimers in the absence of spitz." evidence="7">
    <location>
        <begin position="688"/>
        <end position="1426"/>
    </location>
</feature>
<feature type="mutagenesis site" description="In EGFR-ELP-1.">
    <original>C</original>
    <variation>R</variation>
    <location>
        <position position="793"/>
    </location>
</feature>
<feature type="mutagenesis site" description="In EGFR-ELP-B1 and EGFR-ELP-B1RB1.">
    <original>A</original>
    <variation>T</variation>
    <location>
        <position position="936"/>
    </location>
</feature>
<feature type="mutagenesis site" description="In EGFR-ELP-B1RB1.">
    <original>R</original>
    <variation>Q</variation>
    <location>
        <position position="1058"/>
    </location>
</feature>
<feature type="mutagenesis site" description="Weak interaction with EGFRAP; when associated with F-1204; F-1218; F-1246; F-1271; F-1310; F-1342. Very weak interaction with EGFRAP; when associated with F-1204; F-1218; F-1246; F-1271; F-1310; F-1342 and 1405-F-F-1406." evidence="14">
    <original>Y</original>
    <variation>F</variation>
    <location>
        <position position="1095"/>
    </location>
</feature>
<feature type="mutagenesis site" description="In EGFR-2W74.">
    <original>T</original>
    <variation>I</variation>
    <location>
        <position position="1135"/>
    </location>
</feature>
<feature type="mutagenesis site" description="In EGFR-2C82.">
    <original>G</original>
    <variation>S</variation>
    <location>
        <position position="1156"/>
    </location>
</feature>
<feature type="mutagenesis site" description="In EGFR-1F26.">
    <original>P</original>
    <variation>L</variation>
    <location>
        <position position="1162"/>
    </location>
</feature>
<feature type="mutagenesis site" description="In EGFR-2L65.">
    <original>S</original>
    <variation>L</variation>
    <location>
        <position position="1166"/>
    </location>
</feature>
<feature type="mutagenesis site" description="Weak interaction with EGFRAP; when associated with F-1095; F-1218; F-1246; F-1271; F-1310; F-1342. Very weak interaction with EGFRAP; when associated with F-1095; F-1218; F-1246; F-1271; F-1310; F-1342 and 1405-F-F-1406." evidence="14">
    <original>Y</original>
    <variation>F</variation>
    <location>
        <position position="1204"/>
    </location>
</feature>
<feature type="mutagenesis site" description="In EGFR-2X51.">
    <original>DKFTRLP</original>
    <variation>EKVHPAA</variation>
    <location>
        <begin position="1210"/>
        <end position="1216"/>
    </location>
</feature>
<feature type="mutagenesis site" description="Weak interaction with EGFRAP; when associated with F-1095; F-1204; F-1246; F-1271; F-1310; F-1342. Very weak interaction with EGFRAP; when associated with F-1095; F-1204; F-1246; F-1271; F-1310; F-1342 and 1405-F-F-1406." evidence="14">
    <original>Y</original>
    <variation>F</variation>
    <location>
        <position position="1218"/>
    </location>
</feature>
<feature type="mutagenesis site" description="Weak interaction with EGFRAP; when associated with F-1095; F-1204; F-1218; F-1271; F-1310; F-1342. Very weak interaction with EGFRAP; when associated with F-1095; F-1204; F-1218; F-1271; F-1310; F-1342 and 1405-F-F-1406." evidence="14">
    <original>Y</original>
    <variation>F</variation>
    <location>
        <position position="1246"/>
    </location>
</feature>
<feature type="mutagenesis site" description="Cbl-mediated ubiquitination, in response to high levels of Egfr ligand spi, is impaired resulting in reduced interaction with Graf and thus decreased GEEC-mediated endocytosis and degradation. Weak interaction with EGFRAP; when associated with F-1095; F-1204; F-1218; F-1246; F-1310; F-1342. Very weak interaction with EGFRAP; when associated with F-1095; F-1204; F-1218; F-1246; F-1310; F-1342 and 1405-F-F-1406." evidence="13 14">
    <original>Y</original>
    <variation>F</variation>
    <location>
        <position position="1271"/>
    </location>
</feature>
<feature type="mutagenesis site" description="Weak interaction with EGFRAP; when associated with F-1095; F-1204; F-1218; F-1246; F-1271; F-1342. Very weak interaction with EGFRAP; when associated with F-1095; F-1204; F-1218; F-1246; F-1271; F-1342 and 1405-F-F-1406." evidence="14">
    <original>Y</original>
    <variation>F</variation>
    <location>
        <position position="1310"/>
    </location>
</feature>
<feature type="mutagenesis site" description="No effect on interaction with EGFRAP. Decreased interaction with EGFRAP; when associated with 1405-F-F-1406. Very weak interaction with EGFRAP; when associated with F-1095; F-1204; F-1218; F-1246; F-1271; F-1310." evidence="14">
    <original>Y</original>
    <variation>F</variation>
    <location>
        <position position="1357"/>
    </location>
</feature>
<feature type="mutagenesis site" description="Decreased interaction with EGFRAP; when associated with F-1357." evidence="14">
    <original>YY</original>
    <variation>FF</variation>
    <location>
        <begin position="1405"/>
        <end position="1406"/>
    </location>
</feature>
<feature type="sequence conflict" description="In Ref. 5 and 6." evidence="18" ref="5 6">
    <original>K</original>
    <variation>E</variation>
    <location>
        <position position="137"/>
    </location>
</feature>
<feature type="sequence conflict" description="In Ref. 5 and 6." evidence="18" ref="5 6">
    <original>AVS</original>
    <variation>GVC</variation>
    <location>
        <begin position="329"/>
        <end position="331"/>
    </location>
</feature>
<feature type="sequence conflict" description="In Ref. 5 and 6." evidence="18" ref="5 6">
    <original>R</original>
    <variation>L</variation>
    <location>
        <position position="458"/>
    </location>
</feature>
<feature type="sequence conflict" description="In Ref. 5 and 6." evidence="18" ref="5 6">
    <original>R</original>
    <variation>C</variation>
    <location>
        <position position="789"/>
    </location>
</feature>
<feature type="sequence conflict" description="In Ref. 8; CAA26157." evidence="18" ref="8">
    <original>P</original>
    <variation>A</variation>
    <location>
        <position position="959"/>
    </location>
</feature>
<feature type="sequence conflict" description="In Ref. 5 and 6." evidence="18" ref="5 6">
    <original>E</original>
    <variation>V</variation>
    <location>
        <position position="995"/>
    </location>
</feature>
<feature type="sequence conflict" description="In Ref. 3, 4 and 9." evidence="18" ref="3 4 9">
    <original>QTPSLVKIT</original>
    <variation>RLLAGEDH</variation>
    <location>
        <begin position="1072"/>
        <end position="1080"/>
    </location>
</feature>
<feature type="sequence conflict" description="In Ref. 9; CAA05747." evidence="18" ref="9">
    <original>AA</original>
    <variation>I</variation>
    <location>
        <begin position="1097"/>
        <end position="1098"/>
    </location>
</feature>
<feature type="sequence conflict" description="In Ref. 9; CAA05747." evidence="18" ref="9">
    <original>T</original>
    <variation>R</variation>
    <location>
        <position position="1118"/>
    </location>
</feature>
<feature type="sequence conflict" description="In Ref. 5 and 6." evidence="18" ref="5 6">
    <original>K</original>
    <variation>E</variation>
    <location>
        <position position="1242"/>
    </location>
</feature>
<feature type="sequence conflict" description="In Ref. 5 and 6." evidence="18" ref="5 6">
    <original>M</original>
    <variation>I</variation>
    <location>
        <position position="1265"/>
    </location>
</feature>
<feature type="sequence conflict" description="In Ref. 5 and 6." evidence="18" ref="5 6">
    <original>R</original>
    <variation>T</variation>
    <location>
        <position position="1287"/>
    </location>
</feature>
<feature type="sequence conflict" description="In Ref. 6; AAF46732." evidence="18" ref="6">
    <original>M</original>
    <variation>I</variation>
    <location>
        <position position="1325"/>
    </location>
</feature>
<feature type="sequence conflict" description="In Ref. 5 and 6." evidence="18" ref="5 6">
    <original>G</original>
    <variation>V</variation>
    <location>
        <position position="1383"/>
    </location>
</feature>
<feature type="sequence conflict" description="In Ref. 3 and 4." evidence="18" ref="3 4">
    <original>ELQPLHRNRNTETRV</original>
    <variation>SCSHASKPQHGDEGVGSSRVGAIANEEGESCQVPLEAMRYAFAGCYLR</variation>
    <location>
        <begin position="1412"/>
        <end position="1426"/>
    </location>
</feature>
<feature type="strand" evidence="22">
    <location>
        <begin position="101"/>
        <end position="103"/>
    </location>
</feature>
<feature type="helix" evidence="22">
    <location>
        <begin position="115"/>
        <end position="126"/>
    </location>
</feature>
<feature type="strand" evidence="22">
    <location>
        <begin position="131"/>
        <end position="134"/>
    </location>
</feature>
<feature type="strand" evidence="22">
    <location>
        <begin position="136"/>
        <end position="141"/>
    </location>
</feature>
<feature type="helix" evidence="22">
    <location>
        <begin position="149"/>
        <end position="151"/>
    </location>
</feature>
<feature type="strand" evidence="22">
    <location>
        <begin position="156"/>
        <end position="159"/>
    </location>
</feature>
<feature type="strand" evidence="22">
    <location>
        <begin position="161"/>
        <end position="166"/>
    </location>
</feature>
<feature type="strand" evidence="22">
    <location>
        <begin position="169"/>
        <end position="172"/>
    </location>
</feature>
<feature type="strand" evidence="22">
    <location>
        <begin position="194"/>
        <end position="200"/>
    </location>
</feature>
<feature type="strand" evidence="22">
    <location>
        <begin position="204"/>
        <end position="207"/>
    </location>
</feature>
<feature type="strand" evidence="22">
    <location>
        <begin position="216"/>
        <end position="223"/>
    </location>
</feature>
<feature type="turn" evidence="22">
    <location>
        <begin position="230"/>
        <end position="232"/>
    </location>
</feature>
<feature type="helix" evidence="22">
    <location>
        <begin position="235"/>
        <end position="237"/>
    </location>
</feature>
<feature type="strand" evidence="23">
    <location>
        <begin position="239"/>
        <end position="241"/>
    </location>
</feature>
<feature type="strand" evidence="22">
    <location>
        <begin position="246"/>
        <end position="248"/>
    </location>
</feature>
<feature type="strand" evidence="22">
    <location>
        <begin position="269"/>
        <end position="273"/>
    </location>
</feature>
<feature type="helix" evidence="22">
    <location>
        <begin position="274"/>
        <end position="276"/>
    </location>
</feature>
<feature type="strand" evidence="22">
    <location>
        <begin position="281"/>
        <end position="285"/>
    </location>
</feature>
<feature type="strand" evidence="22">
    <location>
        <begin position="287"/>
        <end position="289"/>
    </location>
</feature>
<feature type="strand" evidence="23">
    <location>
        <begin position="290"/>
        <end position="292"/>
    </location>
</feature>
<feature type="strand" evidence="22">
    <location>
        <begin position="295"/>
        <end position="300"/>
    </location>
</feature>
<feature type="strand" evidence="22">
    <location>
        <begin position="305"/>
        <end position="316"/>
    </location>
</feature>
<feature type="strand" evidence="22">
    <location>
        <begin position="319"/>
        <end position="327"/>
    </location>
</feature>
<feature type="strand" evidence="22">
    <location>
        <begin position="330"/>
        <end position="334"/>
    </location>
</feature>
<feature type="strand" evidence="22">
    <location>
        <begin position="338"/>
        <end position="342"/>
    </location>
</feature>
<feature type="turn" evidence="22">
    <location>
        <begin position="343"/>
        <end position="346"/>
    </location>
</feature>
<feature type="strand" evidence="22">
    <location>
        <begin position="347"/>
        <end position="350"/>
    </location>
</feature>
<feature type="strand" evidence="22">
    <location>
        <begin position="356"/>
        <end position="358"/>
    </location>
</feature>
<feature type="strand" evidence="22">
    <location>
        <begin position="361"/>
        <end position="365"/>
    </location>
</feature>
<feature type="strand" evidence="22">
    <location>
        <begin position="370"/>
        <end position="373"/>
    </location>
</feature>
<feature type="strand" evidence="22">
    <location>
        <begin position="376"/>
        <end position="380"/>
    </location>
</feature>
<feature type="strand" evidence="22">
    <location>
        <begin position="385"/>
        <end position="394"/>
    </location>
</feature>
<feature type="strand" evidence="22">
    <location>
        <begin position="396"/>
        <end position="398"/>
    </location>
</feature>
<feature type="strand" evidence="22">
    <location>
        <begin position="402"/>
        <end position="404"/>
    </location>
</feature>
<feature type="turn" evidence="22">
    <location>
        <begin position="411"/>
        <end position="413"/>
    </location>
</feature>
<feature type="helix" evidence="22">
    <location>
        <begin position="414"/>
        <end position="417"/>
    </location>
</feature>
<feature type="strand" evidence="22">
    <location>
        <begin position="421"/>
        <end position="425"/>
    </location>
</feature>
<feature type="strand" evidence="22">
    <location>
        <begin position="427"/>
        <end position="429"/>
    </location>
</feature>
<feature type="helix" evidence="22">
    <location>
        <begin position="431"/>
        <end position="435"/>
    </location>
</feature>
<feature type="strand" evidence="22">
    <location>
        <begin position="438"/>
        <end position="440"/>
    </location>
</feature>
<feature type="turn" evidence="24">
    <location>
        <begin position="442"/>
        <end position="444"/>
    </location>
</feature>
<feature type="strand" evidence="22">
    <location>
        <begin position="446"/>
        <end position="449"/>
    </location>
</feature>
<feature type="helix" evidence="22">
    <location>
        <begin position="455"/>
        <end position="463"/>
    </location>
</feature>
<feature type="strand" evidence="22">
    <location>
        <begin position="466"/>
        <end position="469"/>
    </location>
</feature>
<feature type="strand" evidence="22">
    <location>
        <begin position="471"/>
        <end position="473"/>
    </location>
</feature>
<feature type="helix" evidence="22">
    <location>
        <begin position="484"/>
        <end position="486"/>
    </location>
</feature>
<feature type="strand" evidence="23">
    <location>
        <begin position="491"/>
        <end position="493"/>
    </location>
</feature>
<feature type="turn" evidence="22">
    <location>
        <begin position="499"/>
        <end position="502"/>
    </location>
</feature>
<feature type="strand" evidence="22">
    <location>
        <begin position="503"/>
        <end position="509"/>
    </location>
</feature>
<feature type="strand" evidence="22">
    <location>
        <begin position="525"/>
        <end position="531"/>
    </location>
</feature>
<feature type="turn" evidence="22">
    <location>
        <begin position="539"/>
        <end position="541"/>
    </location>
</feature>
<feature type="helix" evidence="22">
    <location>
        <begin position="544"/>
        <end position="547"/>
    </location>
</feature>
<feature type="strand" evidence="22">
    <location>
        <begin position="555"/>
        <end position="561"/>
    </location>
</feature>
<feature type="helix" evidence="22">
    <location>
        <begin position="563"/>
        <end position="567"/>
    </location>
</feature>
<feature type="turn" evidence="22">
    <location>
        <begin position="568"/>
        <end position="570"/>
    </location>
</feature>
<feature type="strand" evidence="24">
    <location>
        <begin position="575"/>
        <end position="577"/>
    </location>
</feature>
<feature type="strand" evidence="22">
    <location>
        <begin position="582"/>
        <end position="586"/>
    </location>
</feature>
<feature type="strand" evidence="22">
    <location>
        <begin position="590"/>
        <end position="598"/>
    </location>
</feature>
<feature type="strand" evidence="22">
    <location>
        <begin position="601"/>
        <end position="604"/>
    </location>
</feature>
<feature type="strand" evidence="22">
    <location>
        <begin position="608"/>
        <end position="610"/>
    </location>
</feature>
<feature type="strand" evidence="22">
    <location>
        <begin position="616"/>
        <end position="618"/>
    </location>
</feature>
<feature type="strand" evidence="22">
    <location>
        <begin position="628"/>
        <end position="630"/>
    </location>
</feature>
<feature type="strand" evidence="23">
    <location>
        <begin position="632"/>
        <end position="636"/>
    </location>
</feature>
<feature type="strand" evidence="22">
    <location>
        <begin position="638"/>
        <end position="640"/>
    </location>
</feature>
<evidence type="ECO:0000250" key="1"/>
<evidence type="ECO:0000255" key="2"/>
<evidence type="ECO:0000255" key="3">
    <source>
        <dbReference type="PROSITE-ProRule" id="PRU00159"/>
    </source>
</evidence>
<evidence type="ECO:0000255" key="4">
    <source>
        <dbReference type="PROSITE-ProRule" id="PRU10028"/>
    </source>
</evidence>
<evidence type="ECO:0000256" key="5">
    <source>
        <dbReference type="SAM" id="MobiDB-lite"/>
    </source>
</evidence>
<evidence type="ECO:0000269" key="6">
    <source>
    </source>
</evidence>
<evidence type="ECO:0000269" key="7">
    <source>
    </source>
</evidence>
<evidence type="ECO:0000269" key="8">
    <source>
    </source>
</evidence>
<evidence type="ECO:0000269" key="9">
    <source>
    </source>
</evidence>
<evidence type="ECO:0000269" key="10">
    <source>
    </source>
</evidence>
<evidence type="ECO:0000269" key="11">
    <source>
    </source>
</evidence>
<evidence type="ECO:0000269" key="12">
    <source>
    </source>
</evidence>
<evidence type="ECO:0000269" key="13">
    <source>
    </source>
</evidence>
<evidence type="ECO:0000269" key="14">
    <source>
    </source>
</evidence>
<evidence type="ECO:0000269" key="15">
    <source>
    </source>
</evidence>
<evidence type="ECO:0000269" key="16">
    <source>
    </source>
</evidence>
<evidence type="ECO:0000303" key="17">
    <source>
    </source>
</evidence>
<evidence type="ECO:0000305" key="18"/>
<evidence type="ECO:0007744" key="19">
    <source>
        <dbReference type="PDB" id="3I2T"/>
    </source>
</evidence>
<evidence type="ECO:0007744" key="20">
    <source>
        <dbReference type="PDB" id="3LTF"/>
    </source>
</evidence>
<evidence type="ECO:0007744" key="21">
    <source>
        <dbReference type="PDB" id="3LTG"/>
    </source>
</evidence>
<evidence type="ECO:0007829" key="22">
    <source>
        <dbReference type="PDB" id="3I2T"/>
    </source>
</evidence>
<evidence type="ECO:0007829" key="23">
    <source>
        <dbReference type="PDB" id="3LTF"/>
    </source>
</evidence>
<evidence type="ECO:0007829" key="24">
    <source>
        <dbReference type="PDB" id="3LTG"/>
    </source>
</evidence>
<comment type="function">
    <text evidence="7 8 9 10 11 12 14 15 16 17">Receptor tyrosine kinase, binding ligands of the EGF family and activating several signaling cascades to convert extracellular cues into appropriate cellular responses (PubMed:22140578, PubMed:23579691, PubMed:8070664, PubMed:9882502). Known ligands include spitz, gurken, vein and giant-lens (PubMed:19718021, PubMed:20723758, PubMed:22140578, PubMed:9882502). Transduces the signal through the ras-raf-MAPK pathway (PubMed:9094709). Critical for the proliferation of imaginal tissues, and for the determination of both the antero-posterior and dorso-ventral polarities of the oocyte (PubMed:23579691, PubMed:34411095, PubMed:9882502). In the embryo, plays a role in the establishment of ventral cell fates, maintenance of amnioserosa and ventral neuroectodermal cells, germ band retraction, cell fate specification in the central nervous system, and production and repair of the cuticle (PubMed:22140578, PubMed:23029159, PubMed:23579691, PubMed:9094709). During dorsal closure (DC) functions with the dpp- and ACK-signaling pathways to regulate expression of the myosin zip in the embryonic epidermis and amnioserosa (AS), and thus coordinate the progression of epidermal cell shape changes required for correct DC (PubMed:23579691). In the embryonic epidermis, functions by negatively regulating dpp and consequently the dpp-dependent expression of the myosin zip (PubMed:23579691). In the AS, negatively regulates the production/ and or secretion of a diffusible signal which, is produced by the ACK-signaling pathway, and acts in the AS and epidermal cells to promote zip expression (PubMed:23579691). Also required in the AS to inhibit or delay apoptosis, and consequently slow the rate of DC (PubMed:23579691). Therefore functions at multiple levels to negatively regulate morphogenesis during DC, suggesting that it acts as a general brake mechanism for adjusting the rate of dorsal closure to ensure that closure proceeds smoothly and without loss of epidermal integrity (PubMed:23579691). During oogenesis, one of two tyrosine kinase chemoattractant receptors (Egfr and Pvr), that function in the border cells (BC) to detect guidance cues from the oocyte and transduce this information to the guidance pathway that regulate the collective migration of the BC cluster through the nurse cells to the oocyte (PubMed:24855950).</text>
</comment>
<comment type="catalytic activity">
    <reaction evidence="4">
        <text>L-tyrosyl-[protein] + ATP = O-phospho-L-tyrosyl-[protein] + ADP + H(+)</text>
        <dbReference type="Rhea" id="RHEA:10596"/>
        <dbReference type="Rhea" id="RHEA-COMP:10136"/>
        <dbReference type="Rhea" id="RHEA-COMP:20101"/>
        <dbReference type="ChEBI" id="CHEBI:15378"/>
        <dbReference type="ChEBI" id="CHEBI:30616"/>
        <dbReference type="ChEBI" id="CHEBI:46858"/>
        <dbReference type="ChEBI" id="CHEBI:61978"/>
        <dbReference type="ChEBI" id="CHEBI:456216"/>
        <dbReference type="EC" id="2.7.10.1"/>
    </reaction>
</comment>
<comment type="subunit">
    <text evidence="6 7 8 13 14">Homodimer (PubMed:19718021, PubMed:20723758). Binding of the ligand spitz triggers homodimerization of the receptor however, it is able to form dimers, albeit weakly, in the absence of spitz (PubMed:19718021, PubMed:20723758). Interacts (when phosphorylated on tyrosine residues) with Vav (via SH2 domain) (PubMed:10781813). Interacts (when ubiquitinated) with Graf (PubMed:28993397). May interact (when phosphorylated) with EGFRAP (via SH2 domain) (PubMed:34411095).</text>
</comment>
<comment type="interaction">
    <interactant intactId="EBI-197863">
        <id>P04412</id>
    </interactant>
    <interactant intactId="EBI-6896313">
        <id>P91643</id>
        <label>kek1</label>
    </interactant>
    <organismsDiffer>false</organismsDiffer>
    <experiments>2</experiments>
</comment>
<comment type="interaction">
    <interactant intactId="EBI-197863">
        <id>P04412</id>
    </interactant>
    <interactant intactId="EBI-91342">
        <id>Q01083</id>
        <label>spi</label>
    </interactant>
    <organismsDiffer>false</organismsDiffer>
    <experiments>4</experiments>
</comment>
<comment type="interaction">
    <interactant intactId="EBI-15802052">
        <id>P04412-1</id>
    </interactant>
    <interactant intactId="EBI-15802052">
        <id>P04412-1</id>
        <label>Egfr</label>
    </interactant>
    <organismsDiffer>false</organismsDiffer>
    <experiments>4</experiments>
</comment>
<comment type="subcellular location">
    <subcellularLocation>
        <location>Membrane</location>
        <topology>Single-pass type I membrane protein</topology>
    </subcellularLocation>
</comment>
<comment type="alternative products">
    <event type="alternative splicing"/>
    <isoform>
        <id>P04412-1</id>
        <name>Type I</name>
        <sequence type="displayed"/>
    </isoform>
    <isoform>
        <id>P04412-2</id>
        <name>Type II</name>
        <sequence type="described" ref="VSP_002897"/>
    </isoform>
</comment>
<comment type="tissue specificity">
    <text evidence="16">Ubiquitously expressed in embryos. In larvae, uniform expression is seen in wing disks, genital disk, anlagen of testis and ovary, and brain cortex. In eye-antenna disk, highest expression is anterior to morphogenetic furrow, levels remain high in photoreceptor precursor cells. This pattern is reversed in posterior eye disk. In adults expression is high in brain cortex and thoracic and abdominal ganglia.</text>
</comment>
<comment type="PTM">
    <text evidence="13">Ubiquitination by Cbl in response to high spi, promotes its interaction with Graf and thus facilitates its GPI-enriched endocytic compartment (GEEC) mediated endocytosis and its subsequent degradation.</text>
</comment>
<comment type="disruption phenotype">
    <text evidence="9 10">Embryonic wound healing defects. RNAi-mediated knockdown in tracheal cells results in defective gas-filling lumen in terminal branches (PubMed:23029159).</text>
</comment>
<comment type="similarity">
    <text evidence="3">Belongs to the protein kinase superfamily. Tyr protein kinase family. EGF receptor subfamily.</text>
</comment>
<organism>
    <name type="scientific">Drosophila melanogaster</name>
    <name type="common">Fruit fly</name>
    <dbReference type="NCBI Taxonomy" id="7227"/>
    <lineage>
        <taxon>Eukaryota</taxon>
        <taxon>Metazoa</taxon>
        <taxon>Ecdysozoa</taxon>
        <taxon>Arthropoda</taxon>
        <taxon>Hexapoda</taxon>
        <taxon>Insecta</taxon>
        <taxon>Pterygota</taxon>
        <taxon>Neoptera</taxon>
        <taxon>Endopterygota</taxon>
        <taxon>Diptera</taxon>
        <taxon>Brachycera</taxon>
        <taxon>Muscomorpha</taxon>
        <taxon>Ephydroidea</taxon>
        <taxon>Drosophilidae</taxon>
        <taxon>Drosophila</taxon>
        <taxon>Sophophora</taxon>
    </lineage>
</organism>
<name>EGFR_DROME</name>
<gene>
    <name type="primary">Egfr</name>
    <name type="synonym">c-erbB</name>
    <name type="synonym">DER</name>
    <name type="synonym">top</name>
    <name type="ORF">CG10079</name>
</gene>
<dbReference type="EC" id="2.7.10.1"/>
<dbReference type="EMBL" id="AF052754">
    <property type="protein sequence ID" value="AAC08536.1"/>
    <property type="molecule type" value="Genomic_DNA"/>
</dbReference>
<dbReference type="EMBL" id="AF052753">
    <property type="protein sequence ID" value="AAC08536.1"/>
    <property type="status" value="JOINED"/>
    <property type="molecule type" value="Genomic_DNA"/>
</dbReference>
<dbReference type="EMBL" id="AF052754">
    <property type="protein sequence ID" value="AAC08535.1"/>
    <property type="molecule type" value="Genomic_DNA"/>
</dbReference>
<dbReference type="EMBL" id="AF052752">
    <property type="protein sequence ID" value="AAC08535.1"/>
    <property type="status" value="JOINED"/>
    <property type="molecule type" value="Genomic_DNA"/>
</dbReference>
<dbReference type="EMBL" id="K03054">
    <property type="protein sequence ID" value="AAA51462.1"/>
    <property type="molecule type" value="Genomic_DNA"/>
</dbReference>
<dbReference type="EMBL" id="K03417">
    <property type="protein sequence ID" value="AAA51460.1"/>
    <property type="molecule type" value="mRNA"/>
</dbReference>
<dbReference type="EMBL" id="K03416">
    <property type="protein sequence ID" value="AAA50965.1"/>
    <property type="molecule type" value="mRNA"/>
</dbReference>
<dbReference type="EMBL" id="AF109077">
    <property type="protein sequence ID" value="AAD26134.1"/>
    <property type="molecule type" value="Genomic_DNA"/>
</dbReference>
<dbReference type="EMBL" id="AF109078">
    <property type="protein sequence ID" value="AAD26132.1"/>
    <property type="molecule type" value="Genomic_DNA"/>
</dbReference>
<dbReference type="EMBL" id="AF109082">
    <property type="protein sequence ID" value="AAD26132.1"/>
    <property type="status" value="JOINED"/>
    <property type="molecule type" value="Genomic_DNA"/>
</dbReference>
<dbReference type="EMBL" id="AF109078">
    <property type="protein sequence ID" value="AAD26133.1"/>
    <property type="molecule type" value="Genomic_DNA"/>
</dbReference>
<dbReference type="EMBL" id="AF109084">
    <property type="protein sequence ID" value="AAD26133.1"/>
    <property type="status" value="JOINED"/>
    <property type="molecule type" value="Genomic_DNA"/>
</dbReference>
<dbReference type="EMBL" id="AF109079">
    <property type="protein sequence ID" value="AAD26130.1"/>
    <property type="molecule type" value="Genomic_DNA"/>
</dbReference>
<dbReference type="EMBL" id="AF109081">
    <property type="protein sequence ID" value="AAD26130.1"/>
    <property type="status" value="JOINED"/>
    <property type="molecule type" value="Genomic_DNA"/>
</dbReference>
<dbReference type="EMBL" id="AF109079">
    <property type="protein sequence ID" value="AAD26131.1"/>
    <property type="molecule type" value="Genomic_DNA"/>
</dbReference>
<dbReference type="EMBL" id="AF109083">
    <property type="protein sequence ID" value="AAD26131.1"/>
    <property type="status" value="JOINED"/>
    <property type="molecule type" value="Genomic_DNA"/>
</dbReference>
<dbReference type="EMBL" id="AF109080">
    <property type="protein sequence ID" value="AAD26135.1"/>
    <property type="molecule type" value="Genomic_DNA"/>
</dbReference>
<dbReference type="EMBL" id="AE013599">
    <property type="protein sequence ID" value="AAF46732.1"/>
    <property type="molecule type" value="Genomic_DNA"/>
</dbReference>
<dbReference type="EMBL" id="X02293">
    <property type="protein sequence ID" value="CAA26157.1"/>
    <property type="molecule type" value="Genomic_DNA"/>
</dbReference>
<dbReference type="EMBL" id="AJ002912">
    <property type="protein sequence ID" value="CAA05747.1"/>
    <property type="molecule type" value="Genomic_DNA"/>
</dbReference>
<dbReference type="EMBL" id="X78920">
    <property type="protein sequence ID" value="CAA55523.1"/>
    <property type="molecule type" value="Genomic_DNA"/>
</dbReference>
<dbReference type="EMBL" id="X78918">
    <property type="protein sequence ID" value="CAA55521.1"/>
    <property type="molecule type" value="Genomic_DNA"/>
</dbReference>
<dbReference type="EMBL" id="X78919">
    <property type="protein sequence ID" value="CAA55522.1"/>
    <property type="molecule type" value="Genomic_DNA"/>
</dbReference>
<dbReference type="PIR" id="A00640">
    <property type="entry name" value="GQFFE"/>
</dbReference>
<dbReference type="RefSeq" id="NP_476759.1">
    <property type="nucleotide sequence ID" value="NM_057411.4"/>
</dbReference>
<dbReference type="PDB" id="3I2T">
    <property type="method" value="X-ray"/>
    <property type="resolution" value="2.70 A"/>
    <property type="chains" value="A=100-644"/>
</dbReference>
<dbReference type="PDB" id="3LTF">
    <property type="method" value="X-ray"/>
    <property type="resolution" value="3.20 A"/>
    <property type="chains" value="A/C=100-688"/>
</dbReference>
<dbReference type="PDB" id="3LTG">
    <property type="method" value="X-ray"/>
    <property type="resolution" value="3.40 A"/>
    <property type="chains" value="A/C=100-688"/>
</dbReference>
<dbReference type="PDBsum" id="3I2T"/>
<dbReference type="PDBsum" id="3LTF"/>
<dbReference type="PDBsum" id="3LTG"/>
<dbReference type="SMR" id="P04412"/>
<dbReference type="BioGRID" id="63083">
    <property type="interactions" value="168"/>
</dbReference>
<dbReference type="DIP" id="DIP-17316N"/>
<dbReference type="FunCoup" id="P04412">
    <property type="interactions" value="667"/>
</dbReference>
<dbReference type="IntAct" id="P04412">
    <property type="interactions" value="5"/>
</dbReference>
<dbReference type="MINT" id="P04412"/>
<dbReference type="STRING" id="7227.FBpp0071571"/>
<dbReference type="TCDB" id="8.A.23.1.13">
    <property type="family name" value="the basigin (basigin) family"/>
</dbReference>
<dbReference type="GlyCosmos" id="P04412">
    <property type="glycosylation" value="11 sites, No reported glycans"/>
</dbReference>
<dbReference type="GlyGen" id="P04412">
    <property type="glycosylation" value="12 sites, 1 O-linked glycan (1 site)"/>
</dbReference>
<dbReference type="PaxDb" id="7227-FBpp0071571"/>
<dbReference type="EnsemblMetazoa" id="FBtr0071654">
    <property type="protein sequence ID" value="FBpp0071571"/>
    <property type="gene ID" value="FBgn0003731"/>
</dbReference>
<dbReference type="GeneID" id="37455"/>
<dbReference type="KEGG" id="dme:Dmel_CG10079"/>
<dbReference type="AGR" id="FB:FBgn0003731"/>
<dbReference type="CTD" id="1956"/>
<dbReference type="FlyBase" id="FBgn0003731">
    <property type="gene designation" value="Egfr"/>
</dbReference>
<dbReference type="VEuPathDB" id="VectorBase:FBgn0003731"/>
<dbReference type="eggNOG" id="KOG1025">
    <property type="taxonomic scope" value="Eukaryota"/>
</dbReference>
<dbReference type="HOGENOM" id="CLU_003384_5_1_1"/>
<dbReference type="InParanoid" id="P04412"/>
<dbReference type="OrthoDB" id="6219513at2759"/>
<dbReference type="PhylomeDB" id="P04412"/>
<dbReference type="BRENDA" id="2.7.10.1">
    <property type="organism ID" value="1994"/>
</dbReference>
<dbReference type="Reactome" id="R-DME-1227986">
    <property type="pathway name" value="Signaling by ERBB2"/>
</dbReference>
<dbReference type="Reactome" id="R-DME-1236394">
    <property type="pathway name" value="Signaling by ERBB4"/>
</dbReference>
<dbReference type="Reactome" id="R-DME-1250196">
    <property type="pathway name" value="SHC1 events in ERBB2 signaling"/>
</dbReference>
<dbReference type="Reactome" id="R-DME-1250342">
    <property type="pathway name" value="PI3K events in ERBB4 signaling"/>
</dbReference>
<dbReference type="Reactome" id="R-DME-1250347">
    <property type="pathway name" value="SHC1 events in ERBB4 signaling"/>
</dbReference>
<dbReference type="Reactome" id="R-DME-1251985">
    <property type="pathway name" value="Nuclear signaling by ERBB4"/>
</dbReference>
<dbReference type="Reactome" id="R-DME-1253288">
    <property type="pathway name" value="Downregulation of ERBB4 signaling"/>
</dbReference>
<dbReference type="Reactome" id="R-DME-1257604">
    <property type="pathway name" value="PIP3 activates AKT signaling"/>
</dbReference>
<dbReference type="Reactome" id="R-DME-1358803">
    <property type="pathway name" value="Downregulation of ERBB2:ERBB3 signaling"/>
</dbReference>
<dbReference type="Reactome" id="R-DME-177929">
    <property type="pathway name" value="Signaling by EGFR"/>
</dbReference>
<dbReference type="Reactome" id="R-DME-179812">
    <property type="pathway name" value="GRB2 events in EGFR signaling"/>
</dbReference>
<dbReference type="Reactome" id="R-DME-180292">
    <property type="pathway name" value="GAB1 signalosome"/>
</dbReference>
<dbReference type="Reactome" id="R-DME-180336">
    <property type="pathway name" value="SHC1 events in EGFR signaling"/>
</dbReference>
<dbReference type="Reactome" id="R-DME-182971">
    <property type="pathway name" value="EGFR downregulation"/>
</dbReference>
<dbReference type="Reactome" id="R-DME-1963640">
    <property type="pathway name" value="GRB2 events in ERBB2 signaling"/>
</dbReference>
<dbReference type="Reactome" id="R-DME-1963642">
    <property type="pathway name" value="PI3K events in ERBB2 signaling"/>
</dbReference>
<dbReference type="Reactome" id="R-DME-212718">
    <property type="pathway name" value="EGFR interacts with phospholipase C-gamma"/>
</dbReference>
<dbReference type="Reactome" id="R-DME-2179392">
    <property type="pathway name" value="EGFR Transactivation by Gastrin"/>
</dbReference>
<dbReference type="Reactome" id="R-DME-416572">
    <property type="pathway name" value="Sema4D induced cell migration and growth-cone collapse"/>
</dbReference>
<dbReference type="Reactome" id="R-DME-5673001">
    <property type="pathway name" value="RAF/MAP kinase cascade"/>
</dbReference>
<dbReference type="Reactome" id="R-DME-6785631">
    <property type="pathway name" value="ERBB2 Regulates Cell Motility"/>
</dbReference>
<dbReference type="Reactome" id="R-DME-6811558">
    <property type="pathway name" value="PI5P, PP2A and IER3 Regulate PI3K/AKT Signaling"/>
</dbReference>
<dbReference type="Reactome" id="R-DME-8856825">
    <property type="pathway name" value="Cargo recognition for clathrin-mediated endocytosis"/>
</dbReference>
<dbReference type="Reactome" id="R-DME-8856828">
    <property type="pathway name" value="Clathrin-mediated endocytosis"/>
</dbReference>
<dbReference type="Reactome" id="R-DME-8863795">
    <property type="pathway name" value="Downregulation of ERBB2 signaling"/>
</dbReference>
<dbReference type="Reactome" id="R-DME-9018519">
    <property type="pathway name" value="Estrogen-dependent gene expression"/>
</dbReference>
<dbReference type="Reactome" id="R-DME-9652282">
    <property type="pathway name" value="Drug-mediated inhibition of ERBB2 signaling"/>
</dbReference>
<dbReference type="SignaLink" id="P04412"/>
<dbReference type="BioGRID-ORCS" id="37455">
    <property type="hits" value="0 hits in 3 CRISPR screens"/>
</dbReference>
<dbReference type="ChiTaRS" id="Egfr">
    <property type="organism name" value="fly"/>
</dbReference>
<dbReference type="EvolutionaryTrace" id="P04412"/>
<dbReference type="GenomeRNAi" id="37455"/>
<dbReference type="PRO" id="PR:P04412"/>
<dbReference type="Proteomes" id="UP000000803">
    <property type="component" value="Chromosome 2R"/>
</dbReference>
<dbReference type="Bgee" id="FBgn0003731">
    <property type="expression patterns" value="Expressed in adult Malpighian tubule tiny cell (Drosophila) in Malpighian tubule and 214 other cell types or tissues"/>
</dbReference>
<dbReference type="ExpressionAtlas" id="P04412">
    <property type="expression patterns" value="baseline and differential"/>
</dbReference>
<dbReference type="GO" id="GO:0016324">
    <property type="term" value="C:apical plasma membrane"/>
    <property type="evidence" value="ECO:0000314"/>
    <property type="project" value="FlyBase"/>
</dbReference>
<dbReference type="GO" id="GO:0009925">
    <property type="term" value="C:basal plasma membrane"/>
    <property type="evidence" value="ECO:0000318"/>
    <property type="project" value="GO_Central"/>
</dbReference>
<dbReference type="GO" id="GO:0005886">
    <property type="term" value="C:plasma membrane"/>
    <property type="evidence" value="ECO:0000314"/>
    <property type="project" value="FlyBase"/>
</dbReference>
<dbReference type="GO" id="GO:0043235">
    <property type="term" value="C:receptor complex"/>
    <property type="evidence" value="ECO:0000318"/>
    <property type="project" value="GO_Central"/>
</dbReference>
<dbReference type="GO" id="GO:0005524">
    <property type="term" value="F:ATP binding"/>
    <property type="evidence" value="ECO:0007669"/>
    <property type="project" value="UniProtKB-KW"/>
</dbReference>
<dbReference type="GO" id="GO:0005006">
    <property type="term" value="F:epidermal growth factor receptor activity"/>
    <property type="evidence" value="ECO:0000314"/>
    <property type="project" value="FlyBase"/>
</dbReference>
<dbReference type="GO" id="GO:0042802">
    <property type="term" value="F:identical protein binding"/>
    <property type="evidence" value="ECO:0000353"/>
    <property type="project" value="IntAct"/>
</dbReference>
<dbReference type="GO" id="GO:0004714">
    <property type="term" value="F:transmembrane receptor protein tyrosine kinase activity"/>
    <property type="evidence" value="ECO:0000318"/>
    <property type="project" value="GO_Central"/>
</dbReference>
<dbReference type="GO" id="GO:0048149">
    <property type="term" value="P:behavioral response to ethanol"/>
    <property type="evidence" value="ECO:0000315"/>
    <property type="project" value="FlyBase"/>
</dbReference>
<dbReference type="GO" id="GO:0007298">
    <property type="term" value="P:border follicle cell migration"/>
    <property type="evidence" value="ECO:0000315"/>
    <property type="project" value="FlyBase"/>
</dbReference>
<dbReference type="GO" id="GO:0030031">
    <property type="term" value="P:cell projection assembly"/>
    <property type="evidence" value="ECO:0000315"/>
    <property type="project" value="FlyBase"/>
</dbReference>
<dbReference type="GO" id="GO:0030381">
    <property type="term" value="P:chorion-containing eggshell pattern formation"/>
    <property type="evidence" value="ECO:0000316"/>
    <property type="project" value="FlyBase"/>
</dbReference>
<dbReference type="GO" id="GO:0042675">
    <property type="term" value="P:compound eye cone cell differentiation"/>
    <property type="evidence" value="ECO:0000315"/>
    <property type="project" value="FlyBase"/>
</dbReference>
<dbReference type="GO" id="GO:0048749">
    <property type="term" value="P:compound eye development"/>
    <property type="evidence" value="ECO:0000315"/>
    <property type="project" value="FlyBase"/>
</dbReference>
<dbReference type="GO" id="GO:0001751">
    <property type="term" value="P:compound eye photoreceptor cell differentiation"/>
    <property type="evidence" value="ECO:0000315"/>
    <property type="project" value="FlyBase"/>
</dbReference>
<dbReference type="GO" id="GO:0008340">
    <property type="term" value="P:determination of adult lifespan"/>
    <property type="evidence" value="ECO:0000315"/>
    <property type="project" value="FlyBase"/>
</dbReference>
<dbReference type="GO" id="GO:0035225">
    <property type="term" value="P:determination of genital disc primordium"/>
    <property type="evidence" value="ECO:0000315"/>
    <property type="project" value="FlyBase"/>
</dbReference>
<dbReference type="GO" id="GO:0048546">
    <property type="term" value="P:digestive tract morphogenesis"/>
    <property type="evidence" value="ECO:0000315"/>
    <property type="project" value="FlyBase"/>
</dbReference>
<dbReference type="GO" id="GO:0046843">
    <property type="term" value="P:dorsal appendage formation"/>
    <property type="evidence" value="ECO:0000315"/>
    <property type="project" value="FlyBase"/>
</dbReference>
<dbReference type="GO" id="GO:0007391">
    <property type="term" value="P:dorsal closure"/>
    <property type="evidence" value="ECO:0000315"/>
    <property type="project" value="UniProtKB"/>
</dbReference>
<dbReference type="GO" id="GO:0007395">
    <property type="term" value="P:dorsal closure, spreading of leading edge cells"/>
    <property type="evidence" value="ECO:0000315"/>
    <property type="project" value="UniProtKB"/>
</dbReference>
<dbReference type="GO" id="GO:0009792">
    <property type="term" value="P:embryo development ending in birth or egg hatching"/>
    <property type="evidence" value="ECO:0000315"/>
    <property type="project" value="CACAO"/>
</dbReference>
<dbReference type="GO" id="GO:0009880">
    <property type="term" value="P:embryonic pattern specification"/>
    <property type="evidence" value="ECO:0000316"/>
    <property type="project" value="FlyBase"/>
</dbReference>
<dbReference type="GO" id="GO:0007173">
    <property type="term" value="P:epidermal growth factor receptor signaling pathway"/>
    <property type="evidence" value="ECO:0000314"/>
    <property type="project" value="FlyBase"/>
</dbReference>
<dbReference type="GO" id="GO:0061331">
    <property type="term" value="P:epithelial cell proliferation involved in Malpighian tubule morphogenesis"/>
    <property type="evidence" value="ECO:0000315"/>
    <property type="project" value="FlyBase"/>
</dbReference>
<dbReference type="GO" id="GO:0045198">
    <property type="term" value="P:establishment of epithelial cell apical/basal polarity"/>
    <property type="evidence" value="ECO:0000315"/>
    <property type="project" value="FlyBase"/>
</dbReference>
<dbReference type="GO" id="GO:0035088">
    <property type="term" value="P:establishment or maintenance of apical/basal cell polarity"/>
    <property type="evidence" value="ECO:0000315"/>
    <property type="project" value="FlyBase"/>
</dbReference>
<dbReference type="GO" id="GO:0001654">
    <property type="term" value="P:eye development"/>
    <property type="evidence" value="ECO:0000315"/>
    <property type="project" value="FlyBase"/>
</dbReference>
<dbReference type="GO" id="GO:0007455">
    <property type="term" value="P:eye-antennal disc morphogenesis"/>
    <property type="evidence" value="ECO:0000315"/>
    <property type="project" value="FlyBase"/>
</dbReference>
<dbReference type="GO" id="GO:0007390">
    <property type="term" value="P:germ-band shortening"/>
    <property type="evidence" value="ECO:0000315"/>
    <property type="project" value="FlyBase"/>
</dbReference>
<dbReference type="GO" id="GO:0030718">
    <property type="term" value="P:germ-line stem cell population maintenance"/>
    <property type="evidence" value="ECO:0000316"/>
    <property type="project" value="FlyBase"/>
</dbReference>
<dbReference type="GO" id="GO:0008406">
    <property type="term" value="P:gonad development"/>
    <property type="evidence" value="ECO:0000315"/>
    <property type="project" value="FlyBase"/>
</dbReference>
<dbReference type="GO" id="GO:0007482">
    <property type="term" value="P:haltere development"/>
    <property type="evidence" value="ECO:0000315"/>
    <property type="project" value="FlyBase"/>
</dbReference>
<dbReference type="GO" id="GO:0003015">
    <property type="term" value="P:heart process"/>
    <property type="evidence" value="ECO:0000315"/>
    <property type="project" value="FlyBase"/>
</dbReference>
<dbReference type="GO" id="GO:0007444">
    <property type="term" value="P:imaginal disc development"/>
    <property type="evidence" value="ECO:0000315"/>
    <property type="project" value="FlyBase"/>
</dbReference>
<dbReference type="GO" id="GO:0007476">
    <property type="term" value="P:imaginal disc-derived wing morphogenesis"/>
    <property type="evidence" value="ECO:0000315"/>
    <property type="project" value="FlyBase"/>
</dbReference>
<dbReference type="GO" id="GO:0008586">
    <property type="term" value="P:imaginal disc-derived wing vein morphogenesis"/>
    <property type="evidence" value="ECO:0000315"/>
    <property type="project" value="FlyBase"/>
</dbReference>
<dbReference type="GO" id="GO:0007474">
    <property type="term" value="P:imaginal disc-derived wing vein specification"/>
    <property type="evidence" value="ECO:0000315"/>
    <property type="project" value="FlyBase"/>
</dbReference>
<dbReference type="GO" id="GO:0007479">
    <property type="term" value="P:leg disc proximal/distal pattern formation"/>
    <property type="evidence" value="ECO:0000315"/>
    <property type="project" value="FlyBase"/>
</dbReference>
<dbReference type="GO" id="GO:0035149">
    <property type="term" value="P:lumen formation, open tracheal system"/>
    <property type="evidence" value="ECO:0000316"/>
    <property type="project" value="FlyBase"/>
</dbReference>
<dbReference type="GO" id="GO:0045199">
    <property type="term" value="P:maintenance of epithelial cell apical/basal polarity"/>
    <property type="evidence" value="ECO:0000315"/>
    <property type="project" value="FlyBase"/>
</dbReference>
<dbReference type="GO" id="GO:0035160">
    <property type="term" value="P:maintenance of epithelial integrity, open tracheal system"/>
    <property type="evidence" value="ECO:0000315"/>
    <property type="project" value="FlyBase"/>
</dbReference>
<dbReference type="GO" id="GO:0007443">
    <property type="term" value="P:Malpighian tubule morphogenesis"/>
    <property type="evidence" value="ECO:0000315"/>
    <property type="project" value="FlyBase"/>
</dbReference>
<dbReference type="GO" id="GO:0008071">
    <property type="term" value="P:maternal determination of dorsal/ventral axis, ovarian follicular epithelium, soma encoded"/>
    <property type="evidence" value="ECO:0000315"/>
    <property type="project" value="FlyBase"/>
</dbReference>
<dbReference type="GO" id="GO:0002009">
    <property type="term" value="P:morphogenesis of an epithelium"/>
    <property type="evidence" value="ECO:0000315"/>
    <property type="project" value="FlyBase"/>
</dbReference>
<dbReference type="GO" id="GO:0016333">
    <property type="term" value="P:morphogenesis of follicular epithelium"/>
    <property type="evidence" value="ECO:0000315"/>
    <property type="project" value="FlyBase"/>
</dbReference>
<dbReference type="GO" id="GO:0043066">
    <property type="term" value="P:negative regulation of apoptotic process"/>
    <property type="evidence" value="ECO:0000315"/>
    <property type="project" value="FlyBase"/>
</dbReference>
<dbReference type="GO" id="GO:2001234">
    <property type="term" value="P:negative regulation of apoptotic signaling pathway"/>
    <property type="evidence" value="ECO:0000316"/>
    <property type="project" value="FlyBase"/>
</dbReference>
<dbReference type="GO" id="GO:0046673">
    <property type="term" value="P:negative regulation of compound eye retinal cell programmed cell death"/>
    <property type="evidence" value="ECO:0000315"/>
    <property type="project" value="FlyBase"/>
</dbReference>
<dbReference type="GO" id="GO:2000134">
    <property type="term" value="P:negative regulation of G1/S transition of mitotic cell cycle"/>
    <property type="evidence" value="ECO:0000315"/>
    <property type="project" value="FlyBase"/>
</dbReference>
<dbReference type="GO" id="GO:0010629">
    <property type="term" value="P:negative regulation of gene expression"/>
    <property type="evidence" value="ECO:0000315"/>
    <property type="project" value="UniProtKB"/>
</dbReference>
<dbReference type="GO" id="GO:0022008">
    <property type="term" value="P:neurogenesis"/>
    <property type="evidence" value="ECO:0000316"/>
    <property type="project" value="FlyBase"/>
</dbReference>
<dbReference type="GO" id="GO:0030182">
    <property type="term" value="P:neuron differentiation"/>
    <property type="evidence" value="ECO:0000318"/>
    <property type="project" value="GO_Central"/>
</dbReference>
<dbReference type="GO" id="GO:0035310">
    <property type="term" value="P:notum cell fate specification"/>
    <property type="evidence" value="ECO:0000315"/>
    <property type="project" value="FlyBase"/>
</dbReference>
<dbReference type="GO" id="GO:0007477">
    <property type="term" value="P:notum development"/>
    <property type="evidence" value="ECO:0000315"/>
    <property type="project" value="FlyBase"/>
</dbReference>
<dbReference type="GO" id="GO:0001742">
    <property type="term" value="P:oenocyte differentiation"/>
    <property type="evidence" value="ECO:0000315"/>
    <property type="project" value="FlyBase"/>
</dbReference>
<dbReference type="GO" id="GO:0008355">
    <property type="term" value="P:olfactory learning"/>
    <property type="evidence" value="ECO:0000315"/>
    <property type="project" value="FlyBase"/>
</dbReference>
<dbReference type="GO" id="GO:0016318">
    <property type="term" value="P:ommatidial rotation"/>
    <property type="evidence" value="ECO:0000315"/>
    <property type="project" value="FlyBase"/>
</dbReference>
<dbReference type="GO" id="GO:0007309">
    <property type="term" value="P:oocyte axis specification"/>
    <property type="evidence" value="ECO:0000315"/>
    <property type="project" value="FlyBase"/>
</dbReference>
<dbReference type="GO" id="GO:0007422">
    <property type="term" value="P:peripheral nervous system development"/>
    <property type="evidence" value="ECO:0000315"/>
    <property type="project" value="FlyBase"/>
</dbReference>
<dbReference type="GO" id="GO:0046530">
    <property type="term" value="P:photoreceptor cell differentiation"/>
    <property type="evidence" value="ECO:0000315"/>
    <property type="project" value="FlyBase"/>
</dbReference>
<dbReference type="GO" id="GO:0043703">
    <property type="term" value="P:photoreceptor cell fate determination"/>
    <property type="evidence" value="ECO:0000315"/>
    <property type="project" value="FlyBase"/>
</dbReference>
<dbReference type="GO" id="GO:1903688">
    <property type="term" value="P:positive regulation of border follicle cell migration"/>
    <property type="evidence" value="ECO:0000316"/>
    <property type="project" value="FlyBase"/>
</dbReference>
<dbReference type="GO" id="GO:0051781">
    <property type="term" value="P:positive regulation of cell division"/>
    <property type="evidence" value="ECO:0000315"/>
    <property type="project" value="FlyBase"/>
</dbReference>
<dbReference type="GO" id="GO:0008284">
    <property type="term" value="P:positive regulation of cell population proliferation"/>
    <property type="evidence" value="ECO:0000315"/>
    <property type="project" value="FlyBase"/>
</dbReference>
<dbReference type="GO" id="GO:0050679">
    <property type="term" value="P:positive regulation of epithelial cell proliferation"/>
    <property type="evidence" value="ECO:0000318"/>
    <property type="project" value="GO_Central"/>
</dbReference>
<dbReference type="GO" id="GO:0070374">
    <property type="term" value="P:positive regulation of ERK1 and ERK2 cascade"/>
    <property type="evidence" value="ECO:0000314"/>
    <property type="project" value="FlyBase"/>
</dbReference>
<dbReference type="GO" id="GO:0010628">
    <property type="term" value="P:positive regulation of gene expression"/>
    <property type="evidence" value="ECO:0000315"/>
    <property type="project" value="UniProtKB"/>
</dbReference>
<dbReference type="GO" id="GO:0045572">
    <property type="term" value="P:positive regulation of imaginal disc growth"/>
    <property type="evidence" value="ECO:0000315"/>
    <property type="project" value="FlyBase"/>
</dbReference>
<dbReference type="GO" id="GO:0043410">
    <property type="term" value="P:positive regulation of MAPK cascade"/>
    <property type="evidence" value="ECO:0000318"/>
    <property type="project" value="GO_Central"/>
</dbReference>
<dbReference type="GO" id="GO:0042327">
    <property type="term" value="P:positive regulation of phosphorylation"/>
    <property type="evidence" value="ECO:0000315"/>
    <property type="project" value="UniProtKB"/>
</dbReference>
<dbReference type="GO" id="GO:0090303">
    <property type="term" value="P:positive regulation of wound healing"/>
    <property type="evidence" value="ECO:0000315"/>
    <property type="project" value="FlyBase"/>
</dbReference>
<dbReference type="GO" id="GO:0045465">
    <property type="term" value="P:R8 cell differentiation"/>
    <property type="evidence" value="ECO:0000315"/>
    <property type="project" value="FlyBase"/>
</dbReference>
<dbReference type="GO" id="GO:0035159">
    <property type="term" value="P:regulation of tube length, open tracheal system"/>
    <property type="evidence" value="ECO:0000315"/>
    <property type="project" value="FlyBase"/>
</dbReference>
<dbReference type="GO" id="GO:0007431">
    <property type="term" value="P:salivary gland development"/>
    <property type="evidence" value="ECO:0000315"/>
    <property type="project" value="FlyBase"/>
</dbReference>
<dbReference type="GO" id="GO:0016330">
    <property type="term" value="P:second mitotic wave involved in compound eye morphogenesis"/>
    <property type="evidence" value="ECO:0000315"/>
    <property type="project" value="FlyBase"/>
</dbReference>
<dbReference type="GO" id="GO:0007367">
    <property type="term" value="P:segment polarity determination"/>
    <property type="evidence" value="ECO:0000315"/>
    <property type="project" value="FlyBase"/>
</dbReference>
<dbReference type="GO" id="GO:0035277">
    <property type="term" value="P:spiracle morphogenesis, open tracheal system"/>
    <property type="evidence" value="ECO:0000315"/>
    <property type="project" value="FlyBase"/>
</dbReference>
<dbReference type="GO" id="GO:0048865">
    <property type="term" value="P:stem cell fate commitment"/>
    <property type="evidence" value="ECO:0000315"/>
    <property type="project" value="FlyBase"/>
</dbReference>
<dbReference type="GO" id="GO:0007426">
    <property type="term" value="P:tracheal outgrowth, open tracheal system"/>
    <property type="evidence" value="ECO:0000315"/>
    <property type="project" value="FlyBase"/>
</dbReference>
<dbReference type="GO" id="GO:0035309">
    <property type="term" value="P:wing and notum subfield formation"/>
    <property type="evidence" value="ECO:0000315"/>
    <property type="project" value="FlyBase"/>
</dbReference>
<dbReference type="GO" id="GO:0007472">
    <property type="term" value="P:wing disc morphogenesis"/>
    <property type="evidence" value="ECO:0000315"/>
    <property type="project" value="FlyBase"/>
</dbReference>
<dbReference type="CDD" id="cd00064">
    <property type="entry name" value="FU"/>
    <property type="match status" value="6"/>
</dbReference>
<dbReference type="CDD" id="cd05057">
    <property type="entry name" value="PTKc_EGFR_like"/>
    <property type="match status" value="1"/>
</dbReference>
<dbReference type="FunFam" id="2.10.220.10:FF:000001">
    <property type="entry name" value="Receptor protein-tyrosine kinase"/>
    <property type="match status" value="1"/>
</dbReference>
<dbReference type="FunFam" id="2.10.220.10:FF:000024">
    <property type="entry name" value="Receptor protein-tyrosine kinase"/>
    <property type="match status" value="1"/>
</dbReference>
<dbReference type="FunFam" id="2.10.220.10:FF:000036">
    <property type="entry name" value="Receptor protein-tyrosine kinase"/>
    <property type="match status" value="1"/>
</dbReference>
<dbReference type="FunFam" id="3.30.200.20:FF:000422">
    <property type="entry name" value="Receptor protein-tyrosine kinase"/>
    <property type="match status" value="1"/>
</dbReference>
<dbReference type="FunFam" id="3.80.20.20:FF:000009">
    <property type="entry name" value="Receptor protein-tyrosine kinase"/>
    <property type="match status" value="1"/>
</dbReference>
<dbReference type="FunFam" id="3.80.20.20:FF:000010">
    <property type="entry name" value="Receptor protein-tyrosine kinase"/>
    <property type="match status" value="1"/>
</dbReference>
<dbReference type="FunFam" id="1.10.510.10:FF:000233">
    <property type="entry name" value="receptor tyrosine-protein kinase erbB-3"/>
    <property type="match status" value="1"/>
</dbReference>
<dbReference type="Gene3D" id="2.10.220.10">
    <property type="entry name" value="Hormone Receptor, Insulin-like Growth Factor Receptor 1, Chain A, domain 2"/>
    <property type="match status" value="4"/>
</dbReference>
<dbReference type="Gene3D" id="3.30.200.20">
    <property type="entry name" value="Phosphorylase Kinase, domain 1"/>
    <property type="match status" value="1"/>
</dbReference>
<dbReference type="Gene3D" id="3.80.20.20">
    <property type="entry name" value="Receptor L-domain"/>
    <property type="match status" value="2"/>
</dbReference>
<dbReference type="Gene3D" id="1.10.510.10">
    <property type="entry name" value="Transferase(Phosphotransferase) domain 1"/>
    <property type="match status" value="1"/>
</dbReference>
<dbReference type="InterPro" id="IPR006211">
    <property type="entry name" value="Furin-like_Cys-rich_dom"/>
</dbReference>
<dbReference type="InterPro" id="IPR006212">
    <property type="entry name" value="Furin_repeat"/>
</dbReference>
<dbReference type="InterPro" id="IPR032778">
    <property type="entry name" value="GF_recep_IV"/>
</dbReference>
<dbReference type="InterPro" id="IPR009030">
    <property type="entry name" value="Growth_fac_rcpt_cys_sf"/>
</dbReference>
<dbReference type="InterPro" id="IPR011009">
    <property type="entry name" value="Kinase-like_dom_sf"/>
</dbReference>
<dbReference type="InterPro" id="IPR000719">
    <property type="entry name" value="Prot_kinase_dom"/>
</dbReference>
<dbReference type="InterPro" id="IPR017441">
    <property type="entry name" value="Protein_kinase_ATP_BS"/>
</dbReference>
<dbReference type="InterPro" id="IPR000494">
    <property type="entry name" value="Rcpt_L-dom"/>
</dbReference>
<dbReference type="InterPro" id="IPR036941">
    <property type="entry name" value="Rcpt_L-dom_sf"/>
</dbReference>
<dbReference type="InterPro" id="IPR050122">
    <property type="entry name" value="RTK"/>
</dbReference>
<dbReference type="InterPro" id="IPR001245">
    <property type="entry name" value="Ser-Thr/Tyr_kinase_cat_dom"/>
</dbReference>
<dbReference type="InterPro" id="IPR008266">
    <property type="entry name" value="Tyr_kinase_AS"/>
</dbReference>
<dbReference type="InterPro" id="IPR020635">
    <property type="entry name" value="Tyr_kinase_cat_dom"/>
</dbReference>
<dbReference type="InterPro" id="IPR016245">
    <property type="entry name" value="Tyr_kinase_EGF/ERB/XmrK_rcpt"/>
</dbReference>
<dbReference type="PANTHER" id="PTHR24416:SF566">
    <property type="entry name" value="EPIDERMAL GROWTH FACTOR RECEPTOR"/>
    <property type="match status" value="1"/>
</dbReference>
<dbReference type="PANTHER" id="PTHR24416">
    <property type="entry name" value="TYROSINE-PROTEIN KINASE RECEPTOR"/>
    <property type="match status" value="1"/>
</dbReference>
<dbReference type="Pfam" id="PF00757">
    <property type="entry name" value="Furin-like"/>
    <property type="match status" value="1"/>
</dbReference>
<dbReference type="Pfam" id="PF14843">
    <property type="entry name" value="GF_recep_IV"/>
    <property type="match status" value="1"/>
</dbReference>
<dbReference type="Pfam" id="PF07714">
    <property type="entry name" value="PK_Tyr_Ser-Thr"/>
    <property type="match status" value="1"/>
</dbReference>
<dbReference type="Pfam" id="PF01030">
    <property type="entry name" value="Recep_L_domain"/>
    <property type="match status" value="2"/>
</dbReference>
<dbReference type="PIRSF" id="PIRSF000619">
    <property type="entry name" value="TyrPK_EGF-R"/>
    <property type="match status" value="1"/>
</dbReference>
<dbReference type="PRINTS" id="PR00109">
    <property type="entry name" value="TYRKINASE"/>
</dbReference>
<dbReference type="SMART" id="SM00261">
    <property type="entry name" value="FU"/>
    <property type="match status" value="7"/>
</dbReference>
<dbReference type="SMART" id="SM00219">
    <property type="entry name" value="TyrKc"/>
    <property type="match status" value="1"/>
</dbReference>
<dbReference type="SUPFAM" id="SSF57184">
    <property type="entry name" value="Growth factor receptor domain"/>
    <property type="match status" value="3"/>
</dbReference>
<dbReference type="SUPFAM" id="SSF52058">
    <property type="entry name" value="L domain-like"/>
    <property type="match status" value="2"/>
</dbReference>
<dbReference type="SUPFAM" id="SSF56112">
    <property type="entry name" value="Protein kinase-like (PK-like)"/>
    <property type="match status" value="1"/>
</dbReference>
<dbReference type="PROSITE" id="PS00107">
    <property type="entry name" value="PROTEIN_KINASE_ATP"/>
    <property type="match status" value="1"/>
</dbReference>
<dbReference type="PROSITE" id="PS50011">
    <property type="entry name" value="PROTEIN_KINASE_DOM"/>
    <property type="match status" value="1"/>
</dbReference>
<dbReference type="PROSITE" id="PS00109">
    <property type="entry name" value="PROTEIN_KINASE_TYR"/>
    <property type="match status" value="1"/>
</dbReference>
<accession>P04412</accession>
<accession>O18370</accession>
<accession>O61601</accession>
<accession>P81868</accession>
<accession>Q9W2G0</accession>
<sequence>MLLRRRNGPCPFPLLLLLLAHCICIWPASAARDRYARQNNRQRHQDIDRDRDRDRFLYRSSSAQNRQRGGANFALGLGANGVTIPTSLEDKNKNEFVKGKICIGTKSRLSVPSNKEHHYRNLRDRYTNCTYVDGNLKLTWLPNENLDLSFLDNIREVTGYILISHVDVKKVVFPKLQIIRGRTLFSLSVEEEKYALFVTYSKMYTLEIPDLRDVLNGQVGFHNNYNLCHMRTIQWSEIVSNGTDAYYNYDFTAPERECPKCHESCTHGCWGEGPKNCQKFSKLTCSPQCAGGRCYGPKPRECCHLFCAGGCTGPTQKDCIACKNFFDEAVSKEECPPMRKYNPTTYVLETNPEGKYAYGATCVKECPGHLLRDNGACVRSCPQDKMDKGGECVPCNGPCPKTCPGVTVLHAGNIDSFRNCTVIDGNIRILDQTFSGFQDVYANYTMGPRYIPLDPERREVFSTVKEITGYLNIEGTHPQFRNLSYFRNLETIHGRQLMESMFAALAIVKSSLYSLEMRNLKQISSGSVVIQHNRDLCYVSNIRWPAIQKEPEQKVWVNENLRADLCEKNGTICSDQCNEDGCWGAGTDQCLTCKNFNFNGTCIADCGYISNAYKFDNRTCKICHPECRTCNGAGADHCQECVHVRDGQHCVSECPKNKYNDRGVCRECHATCDGCTGPKDTIGIGACTTCNLAIINNDATVKRCLLKDDKCPDGYFWEYVHPQEQGSLKPLAGRAVCRKCHPLCELCTNYGYHEQVCSKCTHYKRREQCETECPADHYTDEEQRECFQRHPECNGCTGPGADDCKSCRNFKLFDANETGPYVNSTMFNCTSKCPLEMRHVNYQYTAIGPYCAASPPRSSKITANLDVNMIFIITGAVLVPTICILCVVTYICRQKQKAKKETVKMTMALSGCEDSEPLRPSNIGANLCKLRIVKDAELRKGGVLGMGAFGRVYKGVWVPEGENVKIPVAIKELLKSTGAESSEEFLREAYIMASEEHVNLLKLLAVCMSSQMMLITQLMPLGCLLDYVRNNRDKIGSKALLNWSTQIAKGMSYLEEKRLVHRDLAARNVLVQTPSLVKITDFGLAKLLSSDSNEYKAAGGKMPIKWLALECIRNRVFTSKSDVWAFGVTIWELLTFGQRPHENIPAKDIPDLIEVGLKLEQPEICSLDIYCTLLSCWHLDAAMRPTFKQLTTVFAEFARDPGRYLAIPGDKFTRLPAYTSQDEKDLIRKLAPTTDGSEAIAKPDDYLQPKAAPGPSHRTDCTDEMPKLNRYCKDPSNKNSSTGDDERDSSAREVGVGNLRLDLPVDEDDYLMPTCQPGPNNNNNMNNPNQNNMAAVGVAAGYMDLIGVPVSVDNPEYLLNAQTLGVGESPIPTQTIGIPVMGGPGTMEVKVPMPGSEPTSSDHEYYNDTQRELQPLHRNRNTETRV</sequence>